<feature type="chain" id="PRO_0000081724" description="Protein PES4">
    <location>
        <begin position="1"/>
        <end position="611"/>
    </location>
</feature>
<feature type="domain" description="RRM 1" evidence="1">
    <location>
        <begin position="91"/>
        <end position="169"/>
    </location>
</feature>
<feature type="domain" description="RRM 2" evidence="1">
    <location>
        <begin position="179"/>
        <end position="247"/>
    </location>
</feature>
<feature type="domain" description="RRM 3" evidence="1">
    <location>
        <begin position="303"/>
        <end position="379"/>
    </location>
</feature>
<feature type="domain" description="RRM 4" evidence="1">
    <location>
        <begin position="393"/>
        <end position="471"/>
    </location>
</feature>
<feature type="region of interest" description="Disordered" evidence="2">
    <location>
        <begin position="37"/>
        <end position="81"/>
    </location>
</feature>
<feature type="compositionally biased region" description="Basic and acidic residues" evidence="2">
    <location>
        <begin position="45"/>
        <end position="54"/>
    </location>
</feature>
<feature type="sequence conflict" description="In Ref. 1; BAA05461." evidence="3" ref="1">
    <original>L</original>
    <variation>I</variation>
    <location>
        <position position="124"/>
    </location>
</feature>
<feature type="sequence conflict" description="In Ref. 1; BAA05461." evidence="3" ref="1">
    <original>QVRRGIDFMRFPSATRDENVHGIAEYIFDTYWNRDVLILDKFLSLLNSSPYHEGVLQKQIEEAASSLGFKR</original>
    <variation>ASKKRYRFHEISKCH</variation>
    <location>
        <begin position="541"/>
        <end position="611"/>
    </location>
</feature>
<feature type="strand" evidence="5">
    <location>
        <begin position="304"/>
        <end position="310"/>
    </location>
</feature>
<feature type="helix" evidence="5">
    <location>
        <begin position="316"/>
        <end position="323"/>
    </location>
</feature>
<feature type="strand" evidence="5">
    <location>
        <begin position="329"/>
        <end position="334"/>
    </location>
</feature>
<feature type="strand" evidence="5">
    <location>
        <begin position="342"/>
        <end position="351"/>
    </location>
</feature>
<feature type="helix" evidence="5">
    <location>
        <begin position="352"/>
        <end position="362"/>
    </location>
</feature>
<feature type="strand" evidence="5">
    <location>
        <begin position="373"/>
        <end position="376"/>
    </location>
</feature>
<feature type="strand" evidence="4">
    <location>
        <begin position="393"/>
        <end position="400"/>
    </location>
</feature>
<feature type="helix" evidence="4">
    <location>
        <begin position="406"/>
        <end position="415"/>
    </location>
</feature>
<feature type="strand" evidence="4">
    <location>
        <begin position="421"/>
        <end position="429"/>
    </location>
</feature>
<feature type="turn" evidence="4">
    <location>
        <begin position="430"/>
        <end position="433"/>
    </location>
</feature>
<feature type="strand" evidence="4">
    <location>
        <begin position="434"/>
        <end position="443"/>
    </location>
</feature>
<feature type="helix" evidence="4">
    <location>
        <begin position="444"/>
        <end position="454"/>
    </location>
</feature>
<feature type="strand" evidence="4">
    <location>
        <begin position="465"/>
        <end position="468"/>
    </location>
</feature>
<sequence>MYSISNKKPSILSMVPLNILKNQDLKVKKDQEKKISFNPVVTPIRPDDYHEKTSRSSSSSHSDSPEFLRINNNKSGHKNGKLKSFESKKLVPLFIGDLHETVTEETLKGIFKKYPSFVSAKVCLDSVTKKSLGHGYLNFEDKEEAEKAMEELNYTKVNGKEIRIMPSLRNTTFRKNFGTNVFFSNLPLNNPLLTTRVFYDTFSRYGKILSCKLDSRKDIGFVYFEDEKTARNVIKMYNNTSFFGKKILCGIHFDKEVRSVPNFETQKSRLDAETIIEKEQSLNEKHSKGNDKESKNIYSSSQNSIFIKNLPTITTRDDILNFFSEVGPIKSIYLSNATKVKYLWAFVTYKNSSDSEKAIKRYNNFYFRGKKLLVTRAQDKEERAKFIESQKISTLFLENLSAVCNKEFLKYLCHQENIRPFKIQIDGYDENSSTYSGFIKFRNFEDATRIFNFLNNRLVGGSIVTTSWERQNNAPKYHDGYGMRNIHTSSHPQITPYYQYSHANSLNSPHMRDLSSMNSSTRSLIKNKNFNKKVLETFEKQVRRGIDFMRFPSATRDENVHGIAEYIFDTYWNRDVLILDKFLSLLNSSPYHEGVLQKQIEEAASSLGFKR</sequence>
<reference key="1">
    <citation type="submission" date="1994-01" db="EMBL/GenBank/DDBJ databases">
        <authorList>
            <person name="Araki H."/>
        </authorList>
    </citation>
    <scope>NUCLEOTIDE SEQUENCE [GENOMIC DNA]</scope>
    <source>
        <strain>SK1</strain>
    </source>
</reference>
<reference key="2">
    <citation type="journal article" date="1995" name="Nat. Genet.">
        <title>Analysis of the nucleotide sequence of chromosome VI from Saccharomyces cerevisiae.</title>
        <authorList>
            <person name="Murakami Y."/>
            <person name="Naitou M."/>
            <person name="Hagiwara H."/>
            <person name="Shibata T."/>
            <person name="Ozawa M."/>
            <person name="Sasanuma S."/>
            <person name="Sasanuma M."/>
            <person name="Tsuchiya Y."/>
            <person name="Soeda E."/>
            <person name="Yokoyama K."/>
            <person name="Yamazaki M."/>
            <person name="Tashiro H."/>
            <person name="Eki T."/>
        </authorList>
    </citation>
    <scope>NUCLEOTIDE SEQUENCE [LARGE SCALE GENOMIC DNA]</scope>
    <source>
        <strain>ATCC 204508 / S288c</strain>
    </source>
</reference>
<reference key="3">
    <citation type="journal article" date="2014" name="G3 (Bethesda)">
        <title>The reference genome sequence of Saccharomyces cerevisiae: Then and now.</title>
        <authorList>
            <person name="Engel S.R."/>
            <person name="Dietrich F.S."/>
            <person name="Fisk D.G."/>
            <person name="Binkley G."/>
            <person name="Balakrishnan R."/>
            <person name="Costanzo M.C."/>
            <person name="Dwight S.S."/>
            <person name="Hitz B.C."/>
            <person name="Karra K."/>
            <person name="Nash R.S."/>
            <person name="Weng S."/>
            <person name="Wong E.D."/>
            <person name="Lloyd P."/>
            <person name="Skrzypek M.S."/>
            <person name="Miyasato S.R."/>
            <person name="Simison M."/>
            <person name="Cherry J.M."/>
        </authorList>
    </citation>
    <scope>GENOME REANNOTATION</scope>
    <source>
        <strain>ATCC 204508 / S288c</strain>
    </source>
</reference>
<accession>P39684</accession>
<accession>D6VTQ3</accession>
<name>PES4_YEAST</name>
<protein>
    <recommendedName>
        <fullName>Protein PES4</fullName>
    </recommendedName>
    <alternativeName>
        <fullName>DNA polymerase epsilon suppressor 4</fullName>
    </alternativeName>
</protein>
<organism>
    <name type="scientific">Saccharomyces cerevisiae (strain ATCC 204508 / S288c)</name>
    <name type="common">Baker's yeast</name>
    <dbReference type="NCBI Taxonomy" id="559292"/>
    <lineage>
        <taxon>Eukaryota</taxon>
        <taxon>Fungi</taxon>
        <taxon>Dikarya</taxon>
        <taxon>Ascomycota</taxon>
        <taxon>Saccharomycotina</taxon>
        <taxon>Saccharomycetes</taxon>
        <taxon>Saccharomycetales</taxon>
        <taxon>Saccharomycetaceae</taxon>
        <taxon>Saccharomyces</taxon>
    </lineage>
</organism>
<evidence type="ECO:0000255" key="1">
    <source>
        <dbReference type="PROSITE-ProRule" id="PRU00176"/>
    </source>
</evidence>
<evidence type="ECO:0000256" key="2">
    <source>
        <dbReference type="SAM" id="MobiDB-lite"/>
    </source>
</evidence>
<evidence type="ECO:0000305" key="3"/>
<evidence type="ECO:0007829" key="4">
    <source>
        <dbReference type="PDB" id="6EXX"/>
    </source>
</evidence>
<evidence type="ECO:0007829" key="5">
    <source>
        <dbReference type="PDB" id="6EZ7"/>
    </source>
</evidence>
<keyword id="KW-0002">3D-structure</keyword>
<keyword id="KW-0539">Nucleus</keyword>
<keyword id="KW-1185">Reference proteome</keyword>
<keyword id="KW-0677">Repeat</keyword>
<keyword id="KW-0694">RNA-binding</keyword>
<comment type="subcellular location">
    <subcellularLocation>
        <location evidence="3">Nucleus</location>
    </subcellularLocation>
</comment>
<dbReference type="EMBL" id="D26442">
    <property type="protein sequence ID" value="BAA05461.1"/>
    <property type="molecule type" value="Genomic_DNA"/>
</dbReference>
<dbReference type="EMBL" id="D50617">
    <property type="protein sequence ID" value="BAA09262.1"/>
    <property type="molecule type" value="Genomic_DNA"/>
</dbReference>
<dbReference type="EMBL" id="BK006940">
    <property type="protein sequence ID" value="DAA12463.1"/>
    <property type="molecule type" value="Genomic_DNA"/>
</dbReference>
<dbReference type="PIR" id="S56278">
    <property type="entry name" value="S56278"/>
</dbReference>
<dbReference type="RefSeq" id="NP_116678.1">
    <property type="nucleotide sequence ID" value="NM_001179988.1"/>
</dbReference>
<dbReference type="PDB" id="6EXX">
    <property type="method" value="X-ray"/>
    <property type="resolution" value="1.10 A"/>
    <property type="chains" value="A=391-469"/>
</dbReference>
<dbReference type="PDB" id="6EZ7">
    <property type="method" value="X-ray"/>
    <property type="resolution" value="1.90 A"/>
    <property type="chains" value="A=303-384"/>
</dbReference>
<dbReference type="PDBsum" id="6EXX"/>
<dbReference type="PDBsum" id="6EZ7"/>
<dbReference type="SMR" id="P39684"/>
<dbReference type="BioGRID" id="31176">
    <property type="interactions" value="83"/>
</dbReference>
<dbReference type="FunCoup" id="P39684">
    <property type="interactions" value="45"/>
</dbReference>
<dbReference type="STRING" id="4932.YFR023W"/>
<dbReference type="PaxDb" id="4932-YFR023W"/>
<dbReference type="PeptideAtlas" id="P39684"/>
<dbReference type="EnsemblFungi" id="YFR023W_mRNA">
    <property type="protein sequence ID" value="YFR023W"/>
    <property type="gene ID" value="YFR023W"/>
</dbReference>
<dbReference type="GeneID" id="850579"/>
<dbReference type="KEGG" id="sce:YFR023W"/>
<dbReference type="AGR" id="SGD:S000001919"/>
<dbReference type="SGD" id="S000001919">
    <property type="gene designation" value="PES4"/>
</dbReference>
<dbReference type="VEuPathDB" id="FungiDB:YFR023W"/>
<dbReference type="eggNOG" id="KOG0123">
    <property type="taxonomic scope" value="Eukaryota"/>
</dbReference>
<dbReference type="GeneTree" id="ENSGT00940000176742"/>
<dbReference type="HOGENOM" id="CLU_020939_0_0_1"/>
<dbReference type="InParanoid" id="P39684"/>
<dbReference type="OMA" id="WAFVTYK"/>
<dbReference type="OrthoDB" id="1749473at2759"/>
<dbReference type="BioCyc" id="YEAST:G3O-30474-MONOMER"/>
<dbReference type="Reactome" id="R-SCE-156827">
    <property type="pathway name" value="L13a-mediated translational silencing of Ceruloplasmin expression"/>
</dbReference>
<dbReference type="Reactome" id="R-SCE-429947">
    <property type="pathway name" value="Deadenylation of mRNA"/>
</dbReference>
<dbReference type="Reactome" id="R-SCE-72649">
    <property type="pathway name" value="Translation initiation complex formation"/>
</dbReference>
<dbReference type="Reactome" id="R-SCE-975956">
    <property type="pathway name" value="Nonsense Mediated Decay (NMD) independent of the Exon Junction Complex (EJC)"/>
</dbReference>
<dbReference type="Reactome" id="R-SCE-975957">
    <property type="pathway name" value="Nonsense Mediated Decay (NMD) enhanced by the Exon Junction Complex (EJC)"/>
</dbReference>
<dbReference type="BioGRID-ORCS" id="850579">
    <property type="hits" value="0 hits in 10 CRISPR screens"/>
</dbReference>
<dbReference type="PRO" id="PR:P39684"/>
<dbReference type="Proteomes" id="UP000002311">
    <property type="component" value="Chromosome VI"/>
</dbReference>
<dbReference type="RNAct" id="P39684">
    <property type="molecule type" value="protein"/>
</dbReference>
<dbReference type="GO" id="GO:0010494">
    <property type="term" value="C:cytoplasmic stress granule"/>
    <property type="evidence" value="ECO:0000318"/>
    <property type="project" value="GO_Central"/>
</dbReference>
<dbReference type="GO" id="GO:0005829">
    <property type="term" value="C:cytosol"/>
    <property type="evidence" value="ECO:0000318"/>
    <property type="project" value="GO_Central"/>
</dbReference>
<dbReference type="GO" id="GO:0005634">
    <property type="term" value="C:nucleus"/>
    <property type="evidence" value="ECO:0000318"/>
    <property type="project" value="GO_Central"/>
</dbReference>
<dbReference type="GO" id="GO:0005628">
    <property type="term" value="C:prospore membrane"/>
    <property type="evidence" value="ECO:0000314"/>
    <property type="project" value="SGD"/>
</dbReference>
<dbReference type="GO" id="GO:1990904">
    <property type="term" value="C:ribonucleoprotein complex"/>
    <property type="evidence" value="ECO:0000318"/>
    <property type="project" value="GO_Central"/>
</dbReference>
<dbReference type="GO" id="GO:0003730">
    <property type="term" value="F:mRNA 3'-UTR binding"/>
    <property type="evidence" value="ECO:0000318"/>
    <property type="project" value="GO_Central"/>
</dbReference>
<dbReference type="GO" id="GO:0008143">
    <property type="term" value="F:poly(A) binding"/>
    <property type="evidence" value="ECO:0000318"/>
    <property type="project" value="GO_Central"/>
</dbReference>
<dbReference type="GO" id="GO:0008266">
    <property type="term" value="F:poly(U) RNA binding"/>
    <property type="evidence" value="ECO:0000318"/>
    <property type="project" value="GO_Central"/>
</dbReference>
<dbReference type="GO" id="GO:0010609">
    <property type="term" value="P:mRNA localization resulting in post-transcriptional regulation of gene expression"/>
    <property type="evidence" value="ECO:0000316"/>
    <property type="project" value="SGD"/>
</dbReference>
<dbReference type="GO" id="GO:0016071">
    <property type="term" value="P:mRNA metabolic process"/>
    <property type="evidence" value="ECO:0000316"/>
    <property type="project" value="SGD"/>
</dbReference>
<dbReference type="GO" id="GO:0006417">
    <property type="term" value="P:regulation of translation"/>
    <property type="evidence" value="ECO:0000316"/>
    <property type="project" value="SGD"/>
</dbReference>
<dbReference type="GO" id="GO:0043934">
    <property type="term" value="P:sporulation"/>
    <property type="evidence" value="ECO:0000316"/>
    <property type="project" value="SGD"/>
</dbReference>
<dbReference type="CDD" id="cd21602">
    <property type="entry name" value="RRM2_PES4_MIP6"/>
    <property type="match status" value="1"/>
</dbReference>
<dbReference type="CDD" id="cd21603">
    <property type="entry name" value="RRM3_PES4_MIP6"/>
    <property type="match status" value="1"/>
</dbReference>
<dbReference type="CDD" id="cd21604">
    <property type="entry name" value="RRM4_PES4_MIP6"/>
    <property type="match status" value="1"/>
</dbReference>
<dbReference type="FunFam" id="3.30.70.330:FF:000632">
    <property type="entry name" value="Poly(A) binding protein"/>
    <property type="match status" value="1"/>
</dbReference>
<dbReference type="FunFam" id="3.30.70.330:FF:000889">
    <property type="entry name" value="Poly(A) binding protein"/>
    <property type="match status" value="1"/>
</dbReference>
<dbReference type="Gene3D" id="3.30.70.330">
    <property type="match status" value="4"/>
</dbReference>
<dbReference type="InterPro" id="IPR012677">
    <property type="entry name" value="Nucleotide-bd_a/b_plait_sf"/>
</dbReference>
<dbReference type="InterPro" id="IPR035979">
    <property type="entry name" value="RBD_domain_sf"/>
</dbReference>
<dbReference type="InterPro" id="IPR000504">
    <property type="entry name" value="RRM_dom"/>
</dbReference>
<dbReference type="InterPro" id="IPR003954">
    <property type="entry name" value="RRM_dom_euk"/>
</dbReference>
<dbReference type="PANTHER" id="PTHR24012">
    <property type="entry name" value="RNA BINDING PROTEIN"/>
    <property type="match status" value="1"/>
</dbReference>
<dbReference type="Pfam" id="PF00076">
    <property type="entry name" value="RRM_1"/>
    <property type="match status" value="3"/>
</dbReference>
<dbReference type="SMART" id="SM00360">
    <property type="entry name" value="RRM"/>
    <property type="match status" value="4"/>
</dbReference>
<dbReference type="SMART" id="SM00361">
    <property type="entry name" value="RRM_1"/>
    <property type="match status" value="3"/>
</dbReference>
<dbReference type="SUPFAM" id="SSF54928">
    <property type="entry name" value="RNA-binding domain, RBD"/>
    <property type="match status" value="2"/>
</dbReference>
<dbReference type="PROSITE" id="PS50102">
    <property type="entry name" value="RRM"/>
    <property type="match status" value="4"/>
</dbReference>
<gene>
    <name type="primary">PES4</name>
    <name type="ordered locus">YFR023W</name>
</gene>
<proteinExistence type="evidence at protein level"/>